<reference key="1">
    <citation type="journal article" date="2002" name="Genome">
        <title>Phylogenetic analysis of North American Elymus and the monogenomic Triticeae (Poaceae) using three chloroplast DNA data sets.</title>
        <authorList>
            <person name="Mason-Gamer R.J."/>
            <person name="Orme N.L."/>
            <person name="Anderson C.M."/>
        </authorList>
    </citation>
    <scope>NUCLEOTIDE SEQUENCE [GENOMIC DNA]</scope>
    <source>
        <strain>PI531719</strain>
    </source>
</reference>
<protein>
    <recommendedName>
        <fullName evidence="1">DNA-directed RNA polymerase subunit alpha</fullName>
        <shortName evidence="1">PEP</shortName>
        <ecNumber evidence="1">2.7.7.6</ecNumber>
    </recommendedName>
    <alternativeName>
        <fullName evidence="1">Plastid-encoded RNA polymerase subunit alpha</fullName>
        <shortName evidence="1">RNA polymerase subunit alpha</shortName>
    </alternativeName>
</protein>
<geneLocation type="chloroplast"/>
<accession>Q8MAI6</accession>
<organism>
    <name type="scientific">Thinopyrum elongatum</name>
    <name type="common">Tall wheatgrass</name>
    <name type="synonym">Elymus elongatus</name>
    <dbReference type="NCBI Taxonomy" id="4588"/>
    <lineage>
        <taxon>Eukaryota</taxon>
        <taxon>Viridiplantae</taxon>
        <taxon>Streptophyta</taxon>
        <taxon>Embryophyta</taxon>
        <taxon>Tracheophyta</taxon>
        <taxon>Spermatophyta</taxon>
        <taxon>Magnoliopsida</taxon>
        <taxon>Liliopsida</taxon>
        <taxon>Poales</taxon>
        <taxon>Poaceae</taxon>
        <taxon>BOP clade</taxon>
        <taxon>Pooideae</taxon>
        <taxon>Triticodae</taxon>
        <taxon>Triticeae</taxon>
        <taxon>Triticinae</taxon>
        <taxon>Thinopyrum</taxon>
    </lineage>
</organism>
<keyword id="KW-0150">Chloroplast</keyword>
<keyword id="KW-0240">DNA-directed RNA polymerase</keyword>
<keyword id="KW-0548">Nucleotidyltransferase</keyword>
<keyword id="KW-0934">Plastid</keyword>
<keyword id="KW-0804">Transcription</keyword>
<keyword id="KW-0808">Transferase</keyword>
<comment type="function">
    <text evidence="1">DNA-dependent RNA polymerase catalyzes the transcription of DNA into RNA using the four ribonucleoside triphosphates as substrates.</text>
</comment>
<comment type="catalytic activity">
    <reaction evidence="1">
        <text>RNA(n) + a ribonucleoside 5'-triphosphate = RNA(n+1) + diphosphate</text>
        <dbReference type="Rhea" id="RHEA:21248"/>
        <dbReference type="Rhea" id="RHEA-COMP:14527"/>
        <dbReference type="Rhea" id="RHEA-COMP:17342"/>
        <dbReference type="ChEBI" id="CHEBI:33019"/>
        <dbReference type="ChEBI" id="CHEBI:61557"/>
        <dbReference type="ChEBI" id="CHEBI:140395"/>
        <dbReference type="EC" id="2.7.7.6"/>
    </reaction>
</comment>
<comment type="subunit">
    <text evidence="1">In plastids the minimal PEP RNA polymerase catalytic core is composed of four subunits: alpha, beta, beta', and beta''. When a (nuclear-encoded) sigma factor is associated with the core the holoenzyme is formed, which can initiate transcription.</text>
</comment>
<comment type="subcellular location">
    <subcellularLocation>
        <location>Plastid</location>
        <location>Chloroplast</location>
    </subcellularLocation>
</comment>
<comment type="domain">
    <text evidence="1">The N-terminal domain is essential for RNAP assembly and basal transcription, whereas the C-terminal domain is involved in interaction with transcriptional regulators and with upstream promoter elements.</text>
</comment>
<comment type="similarity">
    <text evidence="1">Belongs to the RNA polymerase alpha chain family.</text>
</comment>
<gene>
    <name evidence="1" type="primary">rpoA</name>
</gene>
<sequence>MVREEVAGSTQTLQWKCVESRVDSKRLYYGRFILSPLRKGQADTVGIALRRALLGEIEGTCITRAKFGSVPHEYSTIAGIEESVQEILLNLKEIVLRSNLYGVRDASICVKGPRYITAQDIILPPSVEIVDTAQPIANLTEPIDFCIDLQIKRDRGYQTELRKNYQDGSYPIDAVSMPVRNVNYSIFSCGNGNEKHEILFLEIWTNGSLTPKEALYEASRNLIDLFLPFLHAEEEGTSFEENKNRFTPPPFTFKKRLTNLKKNKKGIPLNCIFIDQLELTSRTYNCLKRANIHTLLDLLSKTEEDLLRIDSFRMEDRKHIWDTLEKHLPIDLLKNKLSF</sequence>
<name>RPOA_THIEL</name>
<feature type="chain" id="PRO_0000175466" description="DNA-directed RNA polymerase subunit alpha">
    <location>
        <begin position="1"/>
        <end position="339"/>
    </location>
</feature>
<feature type="region of interest" description="Alpha N-terminal domain (alpha-NTD)" evidence="1">
    <location>
        <begin position="1"/>
        <end position="233"/>
    </location>
</feature>
<feature type="region of interest" description="Alpha C-terminal domain (alpha-CTD)" evidence="1">
    <location>
        <begin position="264"/>
        <end position="339"/>
    </location>
</feature>
<proteinExistence type="inferred from homology"/>
<dbReference type="EC" id="2.7.7.6" evidence="1"/>
<dbReference type="EMBL" id="AY115965">
    <property type="protein sequence ID" value="AAM97474.1"/>
    <property type="molecule type" value="Genomic_DNA"/>
</dbReference>
<dbReference type="RefSeq" id="YP_009672420.1">
    <property type="nucleotide sequence ID" value="NC_043841.1"/>
</dbReference>
<dbReference type="SMR" id="Q8MAI6"/>
<dbReference type="GeneID" id="40880321"/>
<dbReference type="GO" id="GO:0009507">
    <property type="term" value="C:chloroplast"/>
    <property type="evidence" value="ECO:0007669"/>
    <property type="project" value="UniProtKB-SubCell"/>
</dbReference>
<dbReference type="GO" id="GO:0000428">
    <property type="term" value="C:DNA-directed RNA polymerase complex"/>
    <property type="evidence" value="ECO:0007669"/>
    <property type="project" value="UniProtKB-KW"/>
</dbReference>
<dbReference type="GO" id="GO:0005739">
    <property type="term" value="C:mitochondrion"/>
    <property type="evidence" value="ECO:0007669"/>
    <property type="project" value="GOC"/>
</dbReference>
<dbReference type="GO" id="GO:0003677">
    <property type="term" value="F:DNA binding"/>
    <property type="evidence" value="ECO:0007669"/>
    <property type="project" value="UniProtKB-UniRule"/>
</dbReference>
<dbReference type="GO" id="GO:0003899">
    <property type="term" value="F:DNA-directed RNA polymerase activity"/>
    <property type="evidence" value="ECO:0007669"/>
    <property type="project" value="UniProtKB-UniRule"/>
</dbReference>
<dbReference type="GO" id="GO:0046983">
    <property type="term" value="F:protein dimerization activity"/>
    <property type="evidence" value="ECO:0007669"/>
    <property type="project" value="InterPro"/>
</dbReference>
<dbReference type="GO" id="GO:0006351">
    <property type="term" value="P:DNA-templated transcription"/>
    <property type="evidence" value="ECO:0007669"/>
    <property type="project" value="UniProtKB-UniRule"/>
</dbReference>
<dbReference type="CDD" id="cd06928">
    <property type="entry name" value="RNAP_alpha_NTD"/>
    <property type="match status" value="1"/>
</dbReference>
<dbReference type="FunFam" id="2.170.120.12:FF:000001">
    <property type="entry name" value="DNA-directed RNA polymerase subunit alpha"/>
    <property type="match status" value="1"/>
</dbReference>
<dbReference type="Gene3D" id="1.10.150.20">
    <property type="entry name" value="5' to 3' exonuclease, C-terminal subdomain"/>
    <property type="match status" value="1"/>
</dbReference>
<dbReference type="Gene3D" id="2.170.120.12">
    <property type="entry name" value="DNA-directed RNA polymerase, insert domain"/>
    <property type="match status" value="1"/>
</dbReference>
<dbReference type="Gene3D" id="3.30.1360.10">
    <property type="entry name" value="RNA polymerase, RBP11-like subunit"/>
    <property type="match status" value="1"/>
</dbReference>
<dbReference type="HAMAP" id="MF_00059">
    <property type="entry name" value="RNApol_bact_RpoA"/>
    <property type="match status" value="1"/>
</dbReference>
<dbReference type="InterPro" id="IPR011262">
    <property type="entry name" value="DNA-dir_RNA_pol_insert"/>
</dbReference>
<dbReference type="InterPro" id="IPR011263">
    <property type="entry name" value="DNA-dir_RNA_pol_RpoA/D/Rpb3"/>
</dbReference>
<dbReference type="InterPro" id="IPR011773">
    <property type="entry name" value="DNA-dir_RpoA"/>
</dbReference>
<dbReference type="InterPro" id="IPR036603">
    <property type="entry name" value="RBP11-like"/>
</dbReference>
<dbReference type="InterPro" id="IPR011260">
    <property type="entry name" value="RNAP_asu_C"/>
</dbReference>
<dbReference type="InterPro" id="IPR036643">
    <property type="entry name" value="RNApol_insert_sf"/>
</dbReference>
<dbReference type="NCBIfam" id="TIGR02027">
    <property type="entry name" value="rpoA"/>
    <property type="match status" value="1"/>
</dbReference>
<dbReference type="Pfam" id="PF01000">
    <property type="entry name" value="RNA_pol_A_bac"/>
    <property type="match status" value="1"/>
</dbReference>
<dbReference type="Pfam" id="PF03118">
    <property type="entry name" value="RNA_pol_A_CTD"/>
    <property type="match status" value="1"/>
</dbReference>
<dbReference type="Pfam" id="PF01193">
    <property type="entry name" value="RNA_pol_L"/>
    <property type="match status" value="1"/>
</dbReference>
<dbReference type="SMART" id="SM00662">
    <property type="entry name" value="RPOLD"/>
    <property type="match status" value="1"/>
</dbReference>
<dbReference type="SUPFAM" id="SSF47789">
    <property type="entry name" value="C-terminal domain of RNA polymerase alpha subunit"/>
    <property type="match status" value="1"/>
</dbReference>
<dbReference type="SUPFAM" id="SSF56553">
    <property type="entry name" value="Insert subdomain of RNA polymerase alpha subunit"/>
    <property type="match status" value="1"/>
</dbReference>
<dbReference type="SUPFAM" id="SSF55257">
    <property type="entry name" value="RBP11-like subunits of RNA polymerase"/>
    <property type="match status" value="1"/>
</dbReference>
<evidence type="ECO:0000255" key="1">
    <source>
        <dbReference type="HAMAP-Rule" id="MF_00059"/>
    </source>
</evidence>